<name>Y1272_BACC2</name>
<reference key="1">
    <citation type="submission" date="2008-10" db="EMBL/GenBank/DDBJ databases">
        <title>Genome sequence of Bacillus cereus G9842.</title>
        <authorList>
            <person name="Dodson R.J."/>
            <person name="Durkin A.S."/>
            <person name="Rosovitz M.J."/>
            <person name="Rasko D.A."/>
            <person name="Hoffmaster A."/>
            <person name="Ravel J."/>
            <person name="Sutton G."/>
        </authorList>
    </citation>
    <scope>NUCLEOTIDE SEQUENCE [LARGE SCALE GENOMIC DNA]</scope>
    <source>
        <strain>G9842</strain>
    </source>
</reference>
<sequence length="87" mass="9647">MAMRFLNIGYGNIVSAHRIIAIVSPESAPIKRTVQEAREHNALLDATYGRKTRAVIVMDDGHVVLSPIQPETIAHRLNNKEDLSEEG</sequence>
<comment type="similarity">
    <text evidence="1">Belongs to the RemA family.</text>
</comment>
<organism>
    <name type="scientific">Bacillus cereus (strain G9842)</name>
    <dbReference type="NCBI Taxonomy" id="405531"/>
    <lineage>
        <taxon>Bacteria</taxon>
        <taxon>Bacillati</taxon>
        <taxon>Bacillota</taxon>
        <taxon>Bacilli</taxon>
        <taxon>Bacillales</taxon>
        <taxon>Bacillaceae</taxon>
        <taxon>Bacillus</taxon>
        <taxon>Bacillus cereus group</taxon>
    </lineage>
</organism>
<gene>
    <name type="ordered locus">BCG9842_B1272</name>
</gene>
<proteinExistence type="inferred from homology"/>
<evidence type="ECO:0000255" key="1">
    <source>
        <dbReference type="HAMAP-Rule" id="MF_01503"/>
    </source>
</evidence>
<accession>B7IUN1</accession>
<protein>
    <recommendedName>
        <fullName evidence="1">Putative regulatory protein BCG9842_B1272</fullName>
    </recommendedName>
</protein>
<feature type="chain" id="PRO_1000198213" description="Putative regulatory protein BCG9842_B1272">
    <location>
        <begin position="1"/>
        <end position="87"/>
    </location>
</feature>
<dbReference type="EMBL" id="CP001186">
    <property type="protein sequence ID" value="ACK93378.1"/>
    <property type="molecule type" value="Genomic_DNA"/>
</dbReference>
<dbReference type="SMR" id="B7IUN1"/>
<dbReference type="KEGG" id="bcg:BCG9842_B1272"/>
<dbReference type="HOGENOM" id="CLU_165326_0_0_9"/>
<dbReference type="Proteomes" id="UP000006744">
    <property type="component" value="Chromosome"/>
</dbReference>
<dbReference type="HAMAP" id="MF_01503">
    <property type="entry name" value="RemA"/>
    <property type="match status" value="1"/>
</dbReference>
<dbReference type="InterPro" id="IPR007169">
    <property type="entry name" value="RemA-like"/>
</dbReference>
<dbReference type="NCBIfam" id="NF046064">
    <property type="entry name" value="MtxBflmRegRemA"/>
    <property type="match status" value="1"/>
</dbReference>
<dbReference type="NCBIfam" id="NF003315">
    <property type="entry name" value="PRK04323.1"/>
    <property type="match status" value="1"/>
</dbReference>
<dbReference type="PANTHER" id="PTHR38449:SF1">
    <property type="entry name" value="REGULATORY PROTEIN SSL2874-RELATED"/>
    <property type="match status" value="1"/>
</dbReference>
<dbReference type="PANTHER" id="PTHR38449">
    <property type="entry name" value="REGULATORY PROTEIN TM_1690-RELATED"/>
    <property type="match status" value="1"/>
</dbReference>
<dbReference type="Pfam" id="PF04025">
    <property type="entry name" value="RemA-like"/>
    <property type="match status" value="1"/>
</dbReference>